<accession>Q0BIW3</accession>
<reference key="1">
    <citation type="submission" date="2006-08" db="EMBL/GenBank/DDBJ databases">
        <title>Complete sequence of chromosome 1 of Burkholderia cepacia AMMD.</title>
        <authorList>
            <person name="Copeland A."/>
            <person name="Lucas S."/>
            <person name="Lapidus A."/>
            <person name="Barry K."/>
            <person name="Detter J.C."/>
            <person name="Glavina del Rio T."/>
            <person name="Hammon N."/>
            <person name="Israni S."/>
            <person name="Pitluck S."/>
            <person name="Bruce D."/>
            <person name="Chain P."/>
            <person name="Malfatti S."/>
            <person name="Shin M."/>
            <person name="Vergez L."/>
            <person name="Schmutz J."/>
            <person name="Larimer F."/>
            <person name="Land M."/>
            <person name="Hauser L."/>
            <person name="Kyrpides N."/>
            <person name="Kim E."/>
            <person name="Parke J."/>
            <person name="Coenye T."/>
            <person name="Konstantinidis K."/>
            <person name="Ramette A."/>
            <person name="Tiedje J."/>
            <person name="Richardson P."/>
        </authorList>
    </citation>
    <scope>NUCLEOTIDE SEQUENCE [LARGE SCALE GENOMIC DNA]</scope>
    <source>
        <strain>ATCC BAA-244 / DSM 16087 / CCUG 44356 / LMG 19182 / AMMD</strain>
    </source>
</reference>
<keyword id="KW-0028">Amino-acid biosynthesis</keyword>
<keyword id="KW-0963">Cytoplasm</keyword>
<keyword id="KW-0368">Histidine biosynthesis</keyword>
<keyword id="KW-0378">Hydrolase</keyword>
<keyword id="KW-0460">Magnesium</keyword>
<keyword id="KW-0479">Metal-binding</keyword>
<keyword id="KW-0862">Zinc</keyword>
<gene>
    <name evidence="1" type="primary">hisI</name>
    <name type="ordered locus">Bamb_0350</name>
</gene>
<dbReference type="EC" id="3.5.4.19" evidence="1"/>
<dbReference type="EMBL" id="CP000440">
    <property type="protein sequence ID" value="ABI85910.1"/>
    <property type="molecule type" value="Genomic_DNA"/>
</dbReference>
<dbReference type="RefSeq" id="WP_006751799.1">
    <property type="nucleotide sequence ID" value="NZ_CP009798.1"/>
</dbReference>
<dbReference type="SMR" id="Q0BIW3"/>
<dbReference type="GeneID" id="93084236"/>
<dbReference type="KEGG" id="bam:Bamb_0350"/>
<dbReference type="PATRIC" id="fig|339670.21.peg.1268"/>
<dbReference type="eggNOG" id="COG0139">
    <property type="taxonomic scope" value="Bacteria"/>
</dbReference>
<dbReference type="UniPathway" id="UPA00031">
    <property type="reaction ID" value="UER00008"/>
</dbReference>
<dbReference type="Proteomes" id="UP000000662">
    <property type="component" value="Chromosome 1"/>
</dbReference>
<dbReference type="GO" id="GO:0005737">
    <property type="term" value="C:cytoplasm"/>
    <property type="evidence" value="ECO:0007669"/>
    <property type="project" value="UniProtKB-SubCell"/>
</dbReference>
<dbReference type="GO" id="GO:0000287">
    <property type="term" value="F:magnesium ion binding"/>
    <property type="evidence" value="ECO:0007669"/>
    <property type="project" value="UniProtKB-UniRule"/>
</dbReference>
<dbReference type="GO" id="GO:0004635">
    <property type="term" value="F:phosphoribosyl-AMP cyclohydrolase activity"/>
    <property type="evidence" value="ECO:0007669"/>
    <property type="project" value="UniProtKB-UniRule"/>
</dbReference>
<dbReference type="GO" id="GO:0008270">
    <property type="term" value="F:zinc ion binding"/>
    <property type="evidence" value="ECO:0007669"/>
    <property type="project" value="UniProtKB-UniRule"/>
</dbReference>
<dbReference type="GO" id="GO:0000105">
    <property type="term" value="P:L-histidine biosynthetic process"/>
    <property type="evidence" value="ECO:0007669"/>
    <property type="project" value="UniProtKB-UniRule"/>
</dbReference>
<dbReference type="FunFam" id="3.10.20.810:FF:000001">
    <property type="entry name" value="Histidine biosynthesis bifunctional protein HisIE"/>
    <property type="match status" value="1"/>
</dbReference>
<dbReference type="Gene3D" id="3.10.20.810">
    <property type="entry name" value="Phosphoribosyl-AMP cyclohydrolase"/>
    <property type="match status" value="1"/>
</dbReference>
<dbReference type="HAMAP" id="MF_01021">
    <property type="entry name" value="HisI"/>
    <property type="match status" value="1"/>
</dbReference>
<dbReference type="InterPro" id="IPR026660">
    <property type="entry name" value="PRA-CH"/>
</dbReference>
<dbReference type="InterPro" id="IPR002496">
    <property type="entry name" value="PRib_AMP_CycHydrolase_dom"/>
</dbReference>
<dbReference type="InterPro" id="IPR038019">
    <property type="entry name" value="PRib_AMP_CycHydrolase_sf"/>
</dbReference>
<dbReference type="NCBIfam" id="NF000768">
    <property type="entry name" value="PRK00051.1"/>
    <property type="match status" value="1"/>
</dbReference>
<dbReference type="PANTHER" id="PTHR42945">
    <property type="entry name" value="HISTIDINE BIOSYNTHESIS BIFUNCTIONAL PROTEIN"/>
    <property type="match status" value="1"/>
</dbReference>
<dbReference type="PANTHER" id="PTHR42945:SF1">
    <property type="entry name" value="HISTIDINE BIOSYNTHESIS BIFUNCTIONAL PROTEIN HIS7"/>
    <property type="match status" value="1"/>
</dbReference>
<dbReference type="Pfam" id="PF01502">
    <property type="entry name" value="PRA-CH"/>
    <property type="match status" value="1"/>
</dbReference>
<dbReference type="SUPFAM" id="SSF141734">
    <property type="entry name" value="HisI-like"/>
    <property type="match status" value="1"/>
</dbReference>
<protein>
    <recommendedName>
        <fullName evidence="1">Phosphoribosyl-AMP cyclohydrolase</fullName>
        <shortName evidence="1">PRA-CH</shortName>
        <ecNumber evidence="1">3.5.4.19</ecNumber>
    </recommendedName>
</protein>
<evidence type="ECO:0000255" key="1">
    <source>
        <dbReference type="HAMAP-Rule" id="MF_01021"/>
    </source>
</evidence>
<comment type="function">
    <text evidence="1">Catalyzes the hydrolysis of the adenine ring of phosphoribosyl-AMP.</text>
</comment>
<comment type="catalytic activity">
    <reaction evidence="1">
        <text>1-(5-phospho-beta-D-ribosyl)-5'-AMP + H2O = 1-(5-phospho-beta-D-ribosyl)-5-[(5-phospho-beta-D-ribosylamino)methylideneamino]imidazole-4-carboxamide</text>
        <dbReference type="Rhea" id="RHEA:20049"/>
        <dbReference type="ChEBI" id="CHEBI:15377"/>
        <dbReference type="ChEBI" id="CHEBI:58435"/>
        <dbReference type="ChEBI" id="CHEBI:59457"/>
        <dbReference type="EC" id="3.5.4.19"/>
    </reaction>
</comment>
<comment type="cofactor">
    <cofactor evidence="1">
        <name>Mg(2+)</name>
        <dbReference type="ChEBI" id="CHEBI:18420"/>
    </cofactor>
    <text evidence="1">Binds 1 Mg(2+) ion per subunit.</text>
</comment>
<comment type="cofactor">
    <cofactor evidence="1">
        <name>Zn(2+)</name>
        <dbReference type="ChEBI" id="CHEBI:29105"/>
    </cofactor>
    <text evidence="1">Binds 1 zinc ion per subunit.</text>
</comment>
<comment type="pathway">
    <text evidence="1">Amino-acid biosynthesis; L-histidine biosynthesis; L-histidine from 5-phospho-alpha-D-ribose 1-diphosphate: step 3/9.</text>
</comment>
<comment type="subunit">
    <text evidence="1">Homodimer.</text>
</comment>
<comment type="subcellular location">
    <subcellularLocation>
        <location evidence="1">Cytoplasm</location>
    </subcellularLocation>
</comment>
<comment type="similarity">
    <text evidence="1">Belongs to the PRA-CH family.</text>
</comment>
<organism>
    <name type="scientific">Burkholderia ambifaria (strain ATCC BAA-244 / DSM 16087 / CCUG 44356 / LMG 19182 / AMMD)</name>
    <name type="common">Burkholderia cepacia (strain AMMD)</name>
    <dbReference type="NCBI Taxonomy" id="339670"/>
    <lineage>
        <taxon>Bacteria</taxon>
        <taxon>Pseudomonadati</taxon>
        <taxon>Pseudomonadota</taxon>
        <taxon>Betaproteobacteria</taxon>
        <taxon>Burkholderiales</taxon>
        <taxon>Burkholderiaceae</taxon>
        <taxon>Burkholderia</taxon>
        <taxon>Burkholderia cepacia complex</taxon>
    </lineage>
</organism>
<sequence>MNTETKALPAWLDKVRWDDNGLVPVIAQEASTNDVLMFAWMNREALAKTIETQRAVYYSRSRKRLWFKGEESGHVQHVHEVRLDCDEDVVLLKVEQVSGIACHTGRHSCFFQKFEGTVDGGDWVAVDPVLKDPEHIYK</sequence>
<name>HIS3_BURCM</name>
<proteinExistence type="inferred from homology"/>
<feature type="chain" id="PRO_1000063393" description="Phosphoribosyl-AMP cyclohydrolase">
    <location>
        <begin position="1"/>
        <end position="138"/>
    </location>
</feature>
<feature type="binding site" evidence="1">
    <location>
        <position position="84"/>
    </location>
    <ligand>
        <name>Mg(2+)</name>
        <dbReference type="ChEBI" id="CHEBI:18420"/>
    </ligand>
</feature>
<feature type="binding site" evidence="1">
    <location>
        <position position="85"/>
    </location>
    <ligand>
        <name>Zn(2+)</name>
        <dbReference type="ChEBI" id="CHEBI:29105"/>
        <note>ligand shared between dimeric partners</note>
    </ligand>
</feature>
<feature type="binding site" evidence="1">
    <location>
        <position position="86"/>
    </location>
    <ligand>
        <name>Mg(2+)</name>
        <dbReference type="ChEBI" id="CHEBI:18420"/>
    </ligand>
</feature>
<feature type="binding site" evidence="1">
    <location>
        <position position="88"/>
    </location>
    <ligand>
        <name>Mg(2+)</name>
        <dbReference type="ChEBI" id="CHEBI:18420"/>
    </ligand>
</feature>
<feature type="binding site" evidence="1">
    <location>
        <position position="102"/>
    </location>
    <ligand>
        <name>Zn(2+)</name>
        <dbReference type="ChEBI" id="CHEBI:29105"/>
        <note>ligand shared between dimeric partners</note>
    </ligand>
</feature>
<feature type="binding site" evidence="1">
    <location>
        <position position="109"/>
    </location>
    <ligand>
        <name>Zn(2+)</name>
        <dbReference type="ChEBI" id="CHEBI:29105"/>
        <note>ligand shared between dimeric partners</note>
    </ligand>
</feature>